<reference key="1">
    <citation type="journal article" date="2012" name="BMC Microbiol.">
        <title>Genome sequence of Desulfitobacterium hafniense DCB-2, a Gram-positive anaerobe capable of dehalogenation and metal reduction.</title>
        <authorList>
            <person name="Kim S.H."/>
            <person name="Harzman C."/>
            <person name="Davis J.K."/>
            <person name="Hutcheson R."/>
            <person name="Broderick J.B."/>
            <person name="Marsh T.L."/>
            <person name="Tiedje J.M."/>
        </authorList>
    </citation>
    <scope>NUCLEOTIDE SEQUENCE [LARGE SCALE GENOMIC DNA]</scope>
    <source>
        <strain>DSM 10664 / DCB-2</strain>
    </source>
</reference>
<name>RL11_DESHD</name>
<proteinExistence type="inferred from homology"/>
<comment type="function">
    <text evidence="1">Forms part of the ribosomal stalk which helps the ribosome interact with GTP-bound translation factors.</text>
</comment>
<comment type="subunit">
    <text evidence="1">Part of the ribosomal stalk of the 50S ribosomal subunit. Interacts with L10 and the large rRNA to form the base of the stalk. L10 forms an elongated spine to which L12 dimers bind in a sequential fashion forming a multimeric L10(L12)X complex.</text>
</comment>
<comment type="PTM">
    <text evidence="1">One or more lysine residues are methylated.</text>
</comment>
<comment type="similarity">
    <text evidence="1">Belongs to the universal ribosomal protein uL11 family.</text>
</comment>
<protein>
    <recommendedName>
        <fullName evidence="1">Large ribosomal subunit protein uL11</fullName>
    </recommendedName>
    <alternativeName>
        <fullName evidence="2">50S ribosomal protein L11</fullName>
    </alternativeName>
</protein>
<evidence type="ECO:0000255" key="1">
    <source>
        <dbReference type="HAMAP-Rule" id="MF_00736"/>
    </source>
</evidence>
<evidence type="ECO:0000305" key="2"/>
<gene>
    <name evidence="1" type="primary">rplK</name>
    <name type="ordered locus">Dhaf_0406</name>
</gene>
<sequence length="142" mass="15097">MAKKVVGLVKLAINAGKANPAPPVGPALGQHGVNIMAFCKEYNERTKDQAGLIIPVEITVYEDRSFTFITKTPPASILLKKAANINSGSSEPNRKKVAQVSKTKVREIAETKMKDLNAASVEAAMSMVEGTARSMGITIVEG</sequence>
<organism>
    <name type="scientific">Desulfitobacterium hafniense (strain DSM 10664 / DCB-2)</name>
    <dbReference type="NCBI Taxonomy" id="272564"/>
    <lineage>
        <taxon>Bacteria</taxon>
        <taxon>Bacillati</taxon>
        <taxon>Bacillota</taxon>
        <taxon>Clostridia</taxon>
        <taxon>Eubacteriales</taxon>
        <taxon>Desulfitobacteriaceae</taxon>
        <taxon>Desulfitobacterium</taxon>
    </lineage>
</organism>
<dbReference type="EMBL" id="CP001336">
    <property type="protein sequence ID" value="ACL18473.1"/>
    <property type="molecule type" value="Genomic_DNA"/>
</dbReference>
<dbReference type="RefSeq" id="WP_005810197.1">
    <property type="nucleotide sequence ID" value="NC_011830.1"/>
</dbReference>
<dbReference type="SMR" id="B8G1V0"/>
<dbReference type="KEGG" id="dhd:Dhaf_0406"/>
<dbReference type="HOGENOM" id="CLU_074237_2_1_9"/>
<dbReference type="Proteomes" id="UP000007726">
    <property type="component" value="Chromosome"/>
</dbReference>
<dbReference type="GO" id="GO:0022625">
    <property type="term" value="C:cytosolic large ribosomal subunit"/>
    <property type="evidence" value="ECO:0007669"/>
    <property type="project" value="TreeGrafter"/>
</dbReference>
<dbReference type="GO" id="GO:0070180">
    <property type="term" value="F:large ribosomal subunit rRNA binding"/>
    <property type="evidence" value="ECO:0007669"/>
    <property type="project" value="UniProtKB-UniRule"/>
</dbReference>
<dbReference type="GO" id="GO:0003735">
    <property type="term" value="F:structural constituent of ribosome"/>
    <property type="evidence" value="ECO:0007669"/>
    <property type="project" value="InterPro"/>
</dbReference>
<dbReference type="GO" id="GO:0006412">
    <property type="term" value="P:translation"/>
    <property type="evidence" value="ECO:0007669"/>
    <property type="project" value="UniProtKB-UniRule"/>
</dbReference>
<dbReference type="CDD" id="cd00349">
    <property type="entry name" value="Ribosomal_L11"/>
    <property type="match status" value="1"/>
</dbReference>
<dbReference type="FunFam" id="1.10.10.250:FF:000001">
    <property type="entry name" value="50S ribosomal protein L11"/>
    <property type="match status" value="1"/>
</dbReference>
<dbReference type="FunFam" id="3.30.1550.10:FF:000001">
    <property type="entry name" value="50S ribosomal protein L11"/>
    <property type="match status" value="1"/>
</dbReference>
<dbReference type="Gene3D" id="1.10.10.250">
    <property type="entry name" value="Ribosomal protein L11, C-terminal domain"/>
    <property type="match status" value="1"/>
</dbReference>
<dbReference type="Gene3D" id="3.30.1550.10">
    <property type="entry name" value="Ribosomal protein L11/L12, N-terminal domain"/>
    <property type="match status" value="1"/>
</dbReference>
<dbReference type="HAMAP" id="MF_00736">
    <property type="entry name" value="Ribosomal_uL11"/>
    <property type="match status" value="1"/>
</dbReference>
<dbReference type="InterPro" id="IPR000911">
    <property type="entry name" value="Ribosomal_uL11"/>
</dbReference>
<dbReference type="InterPro" id="IPR006519">
    <property type="entry name" value="Ribosomal_uL11_bac-typ"/>
</dbReference>
<dbReference type="InterPro" id="IPR020783">
    <property type="entry name" value="Ribosomal_uL11_C"/>
</dbReference>
<dbReference type="InterPro" id="IPR036769">
    <property type="entry name" value="Ribosomal_uL11_C_sf"/>
</dbReference>
<dbReference type="InterPro" id="IPR020784">
    <property type="entry name" value="Ribosomal_uL11_N"/>
</dbReference>
<dbReference type="InterPro" id="IPR036796">
    <property type="entry name" value="Ribosomal_uL11_N_sf"/>
</dbReference>
<dbReference type="NCBIfam" id="TIGR01632">
    <property type="entry name" value="L11_bact"/>
    <property type="match status" value="1"/>
</dbReference>
<dbReference type="PANTHER" id="PTHR11661">
    <property type="entry name" value="60S RIBOSOMAL PROTEIN L12"/>
    <property type="match status" value="1"/>
</dbReference>
<dbReference type="PANTHER" id="PTHR11661:SF1">
    <property type="entry name" value="LARGE RIBOSOMAL SUBUNIT PROTEIN UL11M"/>
    <property type="match status" value="1"/>
</dbReference>
<dbReference type="Pfam" id="PF00298">
    <property type="entry name" value="Ribosomal_L11"/>
    <property type="match status" value="1"/>
</dbReference>
<dbReference type="Pfam" id="PF03946">
    <property type="entry name" value="Ribosomal_L11_N"/>
    <property type="match status" value="1"/>
</dbReference>
<dbReference type="SMART" id="SM00649">
    <property type="entry name" value="RL11"/>
    <property type="match status" value="1"/>
</dbReference>
<dbReference type="SUPFAM" id="SSF54747">
    <property type="entry name" value="Ribosomal L11/L12e N-terminal domain"/>
    <property type="match status" value="1"/>
</dbReference>
<dbReference type="SUPFAM" id="SSF46906">
    <property type="entry name" value="Ribosomal protein L11, C-terminal domain"/>
    <property type="match status" value="1"/>
</dbReference>
<keyword id="KW-0488">Methylation</keyword>
<keyword id="KW-0687">Ribonucleoprotein</keyword>
<keyword id="KW-0689">Ribosomal protein</keyword>
<keyword id="KW-0694">RNA-binding</keyword>
<keyword id="KW-0699">rRNA-binding</keyword>
<feature type="chain" id="PRO_1000195618" description="Large ribosomal subunit protein uL11">
    <location>
        <begin position="1"/>
        <end position="142"/>
    </location>
</feature>
<accession>B8G1V0</accession>